<sequence>MRSIQRRLSVGLFAVLLVVGLVLAQTGLWLFDQGLRRYFAGNLREEAENLLVAMVRGPNGMQLDEQRLNPAFQRPYSGRYFVIELEKDTWRSRSLWDSELEVPHKKGLVQGLVDGPEEQRLLVFRGHYKRMGQKLRIVVAQDYTPILESFARVQWMGLGAGALALLLVLLLQRLTVRRSLRPLEEVRLQIAQLQQGQRSQLDNQAPEELEPLVEQINHLLAHTEETLKRSRNALGNLGHALKTPLAVLVSLAEREEMARQPELQQVLREQLEQIQQRLGRELGKARLVGEALPGAHFDCAEELPSLCDTLRLIHGPHLQVSWSAPPGLRLPWDREDLLEMLGNLLDNACKWADSEVRLTVAQGEGMVRLKVDDDGPGILPDQRQAVLERGTRLDEQVSGHGLGLGIARDIAEACGGRLSLEDSPLGGLRVSVELPLQKSGRAARA</sequence>
<organism>
    <name type="scientific">Pseudomonas aeruginosa (strain ATCC 15692 / DSM 22644 / CIP 104116 / JCM 14847 / LMG 12228 / 1C / PRS 101 / PAO1)</name>
    <dbReference type="NCBI Taxonomy" id="208964"/>
    <lineage>
        <taxon>Bacteria</taxon>
        <taxon>Pseudomonadati</taxon>
        <taxon>Pseudomonadota</taxon>
        <taxon>Gammaproteobacteria</taxon>
        <taxon>Pseudomonadales</taxon>
        <taxon>Pseudomonadaceae</taxon>
        <taxon>Pseudomonas</taxon>
    </lineage>
</organism>
<keyword id="KW-0067">ATP-binding</keyword>
<keyword id="KW-0418">Kinase</keyword>
<keyword id="KW-0472">Membrane</keyword>
<keyword id="KW-0547">Nucleotide-binding</keyword>
<keyword id="KW-0597">Phosphoprotein</keyword>
<keyword id="KW-1185">Reference proteome</keyword>
<keyword id="KW-0732">Signal</keyword>
<keyword id="KW-0808">Transferase</keyword>
<keyword id="KW-0812">Transmembrane</keyword>
<keyword id="KW-1133">Transmembrane helix</keyword>
<keyword id="KW-0902">Two-component regulatory system</keyword>
<gene>
    <name type="primary">carS</name>
    <name type="ordered locus">PA2656</name>
</gene>
<dbReference type="EC" id="2.7.13.3" evidence="1"/>
<dbReference type="EMBL" id="AE004091">
    <property type="protein sequence ID" value="AAG06044.1"/>
    <property type="molecule type" value="Genomic_DNA"/>
</dbReference>
<dbReference type="PIR" id="C83314">
    <property type="entry name" value="C83314"/>
</dbReference>
<dbReference type="RefSeq" id="NP_251346.1">
    <property type="nucleotide sequence ID" value="NC_002516.2"/>
</dbReference>
<dbReference type="RefSeq" id="WP_003090493.1">
    <property type="nucleotide sequence ID" value="NZ_QZGE01000008.1"/>
</dbReference>
<dbReference type="SMR" id="Q9I0I2"/>
<dbReference type="STRING" id="208964.PA2656"/>
<dbReference type="PaxDb" id="208964-PA2656"/>
<dbReference type="GeneID" id="882365"/>
<dbReference type="KEGG" id="pae:PA2656"/>
<dbReference type="PATRIC" id="fig|208964.12.peg.2779"/>
<dbReference type="PseudoCAP" id="PA2656"/>
<dbReference type="HOGENOM" id="CLU_000445_42_3_6"/>
<dbReference type="InParanoid" id="Q9I0I2"/>
<dbReference type="OrthoDB" id="9809567at2"/>
<dbReference type="PhylomeDB" id="Q9I0I2"/>
<dbReference type="BioCyc" id="PAER208964:G1FZ6-2696-MONOMER"/>
<dbReference type="Proteomes" id="UP000002438">
    <property type="component" value="Chromosome"/>
</dbReference>
<dbReference type="GO" id="GO:0005886">
    <property type="term" value="C:plasma membrane"/>
    <property type="evidence" value="ECO:0000318"/>
    <property type="project" value="GO_Central"/>
</dbReference>
<dbReference type="GO" id="GO:0005524">
    <property type="term" value="F:ATP binding"/>
    <property type="evidence" value="ECO:0007669"/>
    <property type="project" value="UniProtKB-KW"/>
</dbReference>
<dbReference type="GO" id="GO:0000155">
    <property type="term" value="F:phosphorelay sensor kinase activity"/>
    <property type="evidence" value="ECO:0007669"/>
    <property type="project" value="InterPro"/>
</dbReference>
<dbReference type="GO" id="GO:0000160">
    <property type="term" value="P:phosphorelay signal transduction system"/>
    <property type="evidence" value="ECO:0000318"/>
    <property type="project" value="GO_Central"/>
</dbReference>
<dbReference type="CDD" id="cd16954">
    <property type="entry name" value="HATPase_PhoQ-like"/>
    <property type="match status" value="1"/>
</dbReference>
<dbReference type="Gene3D" id="1.10.287.130">
    <property type="match status" value="1"/>
</dbReference>
<dbReference type="Gene3D" id="3.30.565.10">
    <property type="entry name" value="Histidine kinase-like ATPase, C-terminal domain"/>
    <property type="match status" value="1"/>
</dbReference>
<dbReference type="InterPro" id="IPR003660">
    <property type="entry name" value="HAMP_dom"/>
</dbReference>
<dbReference type="InterPro" id="IPR036890">
    <property type="entry name" value="HATPase_C_sf"/>
</dbReference>
<dbReference type="InterPro" id="IPR005467">
    <property type="entry name" value="His_kinase_dom"/>
</dbReference>
<dbReference type="InterPro" id="IPR036097">
    <property type="entry name" value="HisK_dim/P_sf"/>
</dbReference>
<dbReference type="InterPro" id="IPR004358">
    <property type="entry name" value="Sig_transdc_His_kin-like_C"/>
</dbReference>
<dbReference type="InterPro" id="IPR050428">
    <property type="entry name" value="TCS_sensor_his_kinase"/>
</dbReference>
<dbReference type="PANTHER" id="PTHR45436:SF5">
    <property type="entry name" value="SENSOR HISTIDINE KINASE TRCS"/>
    <property type="match status" value="1"/>
</dbReference>
<dbReference type="PANTHER" id="PTHR45436">
    <property type="entry name" value="SENSOR HISTIDINE KINASE YKOH"/>
    <property type="match status" value="1"/>
</dbReference>
<dbReference type="Pfam" id="PF02518">
    <property type="entry name" value="HATPase_c"/>
    <property type="match status" value="1"/>
</dbReference>
<dbReference type="PRINTS" id="PR00344">
    <property type="entry name" value="BCTRLSENSOR"/>
</dbReference>
<dbReference type="SMART" id="SM00387">
    <property type="entry name" value="HATPase_c"/>
    <property type="match status" value="1"/>
</dbReference>
<dbReference type="SUPFAM" id="SSF55874">
    <property type="entry name" value="ATPase domain of HSP90 chaperone/DNA topoisomerase II/histidine kinase"/>
    <property type="match status" value="1"/>
</dbReference>
<dbReference type="SUPFAM" id="SSF47384">
    <property type="entry name" value="Homodimeric domain of signal transducing histidine kinase"/>
    <property type="match status" value="1"/>
</dbReference>
<dbReference type="PROSITE" id="PS50885">
    <property type="entry name" value="HAMP"/>
    <property type="match status" value="1"/>
</dbReference>
<dbReference type="PROSITE" id="PS50109">
    <property type="entry name" value="HIS_KIN"/>
    <property type="match status" value="1"/>
</dbReference>
<comment type="function">
    <text evidence="5 7">Member of the two-component regulatory system CarS/CarR that regulates the expression of multiple genes involved in calcium signaling and homeostasis including CarO and CarP (PubMed:26755627). May function as a membrane-associated protein kinase that phosphorylates CarR in response to environmental signals leading to activation of specific gene promoters (Probable).</text>
</comment>
<comment type="catalytic activity">
    <reaction evidence="1">
        <text>ATP + protein L-histidine = ADP + protein N-phospho-L-histidine.</text>
        <dbReference type="EC" id="2.7.13.3"/>
    </reaction>
</comment>
<comment type="subcellular location">
    <subcellularLocation>
        <location evidence="2">Membrane</location>
        <topology evidence="2">Single-pass membrane protein</topology>
    </subcellularLocation>
</comment>
<feature type="signal peptide" evidence="2">
    <location>
        <begin position="1"/>
        <end position="24"/>
    </location>
</feature>
<feature type="chain" id="PRO_0000449419" description="Sensor protein kinase CarS" evidence="2">
    <location>
        <begin position="25"/>
        <end position="445"/>
    </location>
</feature>
<feature type="transmembrane region" description="Helical" evidence="2">
    <location>
        <begin position="150"/>
        <end position="170"/>
    </location>
</feature>
<feature type="domain" description="HAMP" evidence="3">
    <location>
        <begin position="177"/>
        <end position="228"/>
    </location>
</feature>
<feature type="domain" description="Histidine kinase" evidence="4">
    <location>
        <begin position="236"/>
        <end position="438"/>
    </location>
</feature>
<feature type="modified residue" description="Phosphohistidine; by autocatalysis" evidence="4">
    <location>
        <position position="239"/>
    </location>
</feature>
<reference key="1">
    <citation type="journal article" date="2000" name="Nature">
        <title>Complete genome sequence of Pseudomonas aeruginosa PAO1, an opportunistic pathogen.</title>
        <authorList>
            <person name="Stover C.K."/>
            <person name="Pham X.-Q.T."/>
            <person name="Erwin A.L."/>
            <person name="Mizoguchi S.D."/>
            <person name="Warrener P."/>
            <person name="Hickey M.J."/>
            <person name="Brinkman F.S.L."/>
            <person name="Hufnagle W.O."/>
            <person name="Kowalik D.J."/>
            <person name="Lagrou M."/>
            <person name="Garber R.L."/>
            <person name="Goltry L."/>
            <person name="Tolentino E."/>
            <person name="Westbrock-Wadman S."/>
            <person name="Yuan Y."/>
            <person name="Brody L.L."/>
            <person name="Coulter S.N."/>
            <person name="Folger K.R."/>
            <person name="Kas A."/>
            <person name="Larbig K."/>
            <person name="Lim R.M."/>
            <person name="Smith K.A."/>
            <person name="Spencer D.H."/>
            <person name="Wong G.K.-S."/>
            <person name="Wu Z."/>
            <person name="Paulsen I.T."/>
            <person name="Reizer J."/>
            <person name="Saier M.H. Jr."/>
            <person name="Hancock R.E.W."/>
            <person name="Lory S."/>
            <person name="Olson M.V."/>
        </authorList>
    </citation>
    <scope>NUCLEOTIDE SEQUENCE [LARGE SCALE GENOMIC DNA]</scope>
    <source>
        <strain>ATCC 15692 / DSM 22644 / CIP 104116 / JCM 14847 / LMG 12228 / 1C / PRS 101 / PAO1</strain>
    </source>
</reference>
<reference key="2">
    <citation type="journal article" date="2016" name="J. Bacteriol.">
        <title>The Pseudomonas aeruginosa PAO1 Two-Component Regulator CarSR Regulates Calcium Homeostasis and Calcium-Induced Virulence Factor Production through Its Regulatory Targets CarO and CarP.</title>
        <authorList>
            <person name="Guragain M."/>
            <person name="King M.M."/>
            <person name="Williamson K.S."/>
            <person name="Perez-Osorio A.C."/>
            <person name="Akiyama T."/>
            <person name="Khanam S."/>
            <person name="Patrauchan M.A."/>
            <person name="Franklin M.J."/>
        </authorList>
    </citation>
    <scope>FUNCTION</scope>
    <source>
        <strain>ATCC 15692 / DSM 22644 / CIP 104116 / JCM 14847 / LMG 12228 / 1C / PRS 101 / PAO1</strain>
    </source>
</reference>
<proteinExistence type="inferred from homology"/>
<accession>Q9I0I2</accession>
<name>CARS_PSEAE</name>
<protein>
    <recommendedName>
        <fullName evidence="6">Sensor protein kinase CarS</fullName>
        <ecNumber evidence="1">2.7.13.3</ecNumber>
    </recommendedName>
</protein>
<evidence type="ECO:0000250" key="1">
    <source>
        <dbReference type="UniProtKB" id="Q8Z7H3"/>
    </source>
</evidence>
<evidence type="ECO:0000255" key="2"/>
<evidence type="ECO:0000255" key="3">
    <source>
        <dbReference type="PROSITE-ProRule" id="PRU00102"/>
    </source>
</evidence>
<evidence type="ECO:0000255" key="4">
    <source>
        <dbReference type="PROSITE-ProRule" id="PRU00107"/>
    </source>
</evidence>
<evidence type="ECO:0000269" key="5">
    <source>
    </source>
</evidence>
<evidence type="ECO:0000303" key="6">
    <source>
    </source>
</evidence>
<evidence type="ECO:0000305" key="7">
    <source>
    </source>
</evidence>